<protein>
    <recommendedName>
        <fullName evidence="1">Small ribosomal subunit protein uS8</fullName>
    </recommendedName>
    <alternativeName>
        <fullName evidence="2">30S ribosomal protein S8</fullName>
    </alternativeName>
</protein>
<accession>B4TKK1</accession>
<name>RS8_SALHS</name>
<dbReference type="EMBL" id="CP001120">
    <property type="protein sequence ID" value="ACF69900.1"/>
    <property type="molecule type" value="Genomic_DNA"/>
</dbReference>
<dbReference type="RefSeq" id="WP_000062611.1">
    <property type="nucleotide sequence ID" value="NC_011083.1"/>
</dbReference>
<dbReference type="SMR" id="B4TKK1"/>
<dbReference type="GeneID" id="93778681"/>
<dbReference type="KEGG" id="seh:SeHA_C3730"/>
<dbReference type="HOGENOM" id="CLU_098428_0_0_6"/>
<dbReference type="Proteomes" id="UP000001866">
    <property type="component" value="Chromosome"/>
</dbReference>
<dbReference type="GO" id="GO:1990904">
    <property type="term" value="C:ribonucleoprotein complex"/>
    <property type="evidence" value="ECO:0007669"/>
    <property type="project" value="UniProtKB-KW"/>
</dbReference>
<dbReference type="GO" id="GO:0005840">
    <property type="term" value="C:ribosome"/>
    <property type="evidence" value="ECO:0007669"/>
    <property type="project" value="UniProtKB-KW"/>
</dbReference>
<dbReference type="GO" id="GO:0019843">
    <property type="term" value="F:rRNA binding"/>
    <property type="evidence" value="ECO:0007669"/>
    <property type="project" value="UniProtKB-UniRule"/>
</dbReference>
<dbReference type="GO" id="GO:0003735">
    <property type="term" value="F:structural constituent of ribosome"/>
    <property type="evidence" value="ECO:0007669"/>
    <property type="project" value="InterPro"/>
</dbReference>
<dbReference type="GO" id="GO:0006412">
    <property type="term" value="P:translation"/>
    <property type="evidence" value="ECO:0007669"/>
    <property type="project" value="UniProtKB-UniRule"/>
</dbReference>
<dbReference type="FunFam" id="3.30.1370.30:FF:000003">
    <property type="entry name" value="30S ribosomal protein S8"/>
    <property type="match status" value="1"/>
</dbReference>
<dbReference type="FunFam" id="3.30.1490.10:FF:000001">
    <property type="entry name" value="30S ribosomal protein S8"/>
    <property type="match status" value="1"/>
</dbReference>
<dbReference type="Gene3D" id="3.30.1370.30">
    <property type="match status" value="1"/>
</dbReference>
<dbReference type="Gene3D" id="3.30.1490.10">
    <property type="match status" value="1"/>
</dbReference>
<dbReference type="HAMAP" id="MF_01302_B">
    <property type="entry name" value="Ribosomal_uS8_B"/>
    <property type="match status" value="1"/>
</dbReference>
<dbReference type="InterPro" id="IPR000630">
    <property type="entry name" value="Ribosomal_uS8"/>
</dbReference>
<dbReference type="InterPro" id="IPR047863">
    <property type="entry name" value="Ribosomal_uS8_CS"/>
</dbReference>
<dbReference type="InterPro" id="IPR035987">
    <property type="entry name" value="Ribosomal_uS8_sf"/>
</dbReference>
<dbReference type="NCBIfam" id="NF001109">
    <property type="entry name" value="PRK00136.1"/>
    <property type="match status" value="1"/>
</dbReference>
<dbReference type="PANTHER" id="PTHR11758">
    <property type="entry name" value="40S RIBOSOMAL PROTEIN S15A"/>
    <property type="match status" value="1"/>
</dbReference>
<dbReference type="Pfam" id="PF00410">
    <property type="entry name" value="Ribosomal_S8"/>
    <property type="match status" value="1"/>
</dbReference>
<dbReference type="SUPFAM" id="SSF56047">
    <property type="entry name" value="Ribosomal protein S8"/>
    <property type="match status" value="1"/>
</dbReference>
<dbReference type="PROSITE" id="PS00053">
    <property type="entry name" value="RIBOSOMAL_S8"/>
    <property type="match status" value="1"/>
</dbReference>
<comment type="function">
    <text evidence="1">One of the primary rRNA binding proteins, it binds directly to 16S rRNA central domain where it helps coordinate assembly of the platform of the 30S subunit.</text>
</comment>
<comment type="subunit">
    <text evidence="1">Part of the 30S ribosomal subunit. Contacts proteins S5 and S12.</text>
</comment>
<comment type="similarity">
    <text evidence="1">Belongs to the universal ribosomal protein uS8 family.</text>
</comment>
<gene>
    <name evidence="1" type="primary">rpsH</name>
    <name type="ordered locus">SeHA_C3730</name>
</gene>
<evidence type="ECO:0000255" key="1">
    <source>
        <dbReference type="HAMAP-Rule" id="MF_01302"/>
    </source>
</evidence>
<evidence type="ECO:0000305" key="2"/>
<sequence length="130" mass="14127">MSMQDPIADMLTRIRNGQAANKAAVTMPSSKLKVAIANVLKEEGFIEDFKVEGDTKPELELTLKYFQGKAVVESIQRVSRPGLRIYKRKDELPKVMAGLGIAVVSTSKGVMTDRAARQAGLGGEIICYVA</sequence>
<keyword id="KW-0687">Ribonucleoprotein</keyword>
<keyword id="KW-0689">Ribosomal protein</keyword>
<keyword id="KW-0694">RNA-binding</keyword>
<keyword id="KW-0699">rRNA-binding</keyword>
<reference key="1">
    <citation type="journal article" date="2011" name="J. Bacteriol.">
        <title>Comparative genomics of 28 Salmonella enterica isolates: evidence for CRISPR-mediated adaptive sublineage evolution.</title>
        <authorList>
            <person name="Fricke W.F."/>
            <person name="Mammel M.K."/>
            <person name="McDermott P.F."/>
            <person name="Tartera C."/>
            <person name="White D.G."/>
            <person name="Leclerc J.E."/>
            <person name="Ravel J."/>
            <person name="Cebula T.A."/>
        </authorList>
    </citation>
    <scope>NUCLEOTIDE SEQUENCE [LARGE SCALE GENOMIC DNA]</scope>
    <source>
        <strain>SL476</strain>
    </source>
</reference>
<feature type="chain" id="PRO_1000140608" description="Small ribosomal subunit protein uS8">
    <location>
        <begin position="1"/>
        <end position="130"/>
    </location>
</feature>
<organism>
    <name type="scientific">Salmonella heidelberg (strain SL476)</name>
    <dbReference type="NCBI Taxonomy" id="454169"/>
    <lineage>
        <taxon>Bacteria</taxon>
        <taxon>Pseudomonadati</taxon>
        <taxon>Pseudomonadota</taxon>
        <taxon>Gammaproteobacteria</taxon>
        <taxon>Enterobacterales</taxon>
        <taxon>Enterobacteriaceae</taxon>
        <taxon>Salmonella</taxon>
    </lineage>
</organism>
<proteinExistence type="inferred from homology"/>